<sequence>MLAIISSAKTLNFEKLAPKTELTIPVFLTLTNKLLATLQSYSENQLSKIMNISAKLAHINKERFKDFDNQESKAAIFAYAGDVFNNIHIEKLTNHALNFLQSHLLIISGLYGVLKPLDTIKPYRLEMATKLNEINLTNFWQDEVTNYINKILAKQENKYLLNLASQEYSSVINPNKLKYQLVNVHFKENRNGKLSTIGINAKKARGAMVKVIANNLIDSPELLKNFSYLGYAFSTKHSSDNELVFIKS</sequence>
<comment type="similarity">
    <text evidence="1">Belongs to the UPF0246 family.</text>
</comment>
<name>Y836_RICRO</name>
<accession>B0BXU8</accession>
<gene>
    <name type="ordered locus">RrIowa_0836</name>
</gene>
<dbReference type="EMBL" id="CP000766">
    <property type="protein sequence ID" value="ABY72674.1"/>
    <property type="molecule type" value="Genomic_DNA"/>
</dbReference>
<dbReference type="RefSeq" id="WP_012150888.1">
    <property type="nucleotide sequence ID" value="NC_010263.3"/>
</dbReference>
<dbReference type="SMR" id="B0BXU8"/>
<dbReference type="KEGG" id="rrj:RrIowa_0836"/>
<dbReference type="eggNOG" id="COG3022">
    <property type="taxonomic scope" value="Bacteria"/>
</dbReference>
<dbReference type="HOGENOM" id="CLU_061989_0_0_5"/>
<dbReference type="Proteomes" id="UP000000796">
    <property type="component" value="Chromosome"/>
</dbReference>
<dbReference type="GO" id="GO:0005829">
    <property type="term" value="C:cytosol"/>
    <property type="evidence" value="ECO:0007669"/>
    <property type="project" value="TreeGrafter"/>
</dbReference>
<dbReference type="GO" id="GO:0033194">
    <property type="term" value="P:response to hydroperoxide"/>
    <property type="evidence" value="ECO:0007669"/>
    <property type="project" value="TreeGrafter"/>
</dbReference>
<dbReference type="HAMAP" id="MF_00652">
    <property type="entry name" value="UPF0246"/>
    <property type="match status" value="1"/>
</dbReference>
<dbReference type="InterPro" id="IPR005583">
    <property type="entry name" value="YaaA"/>
</dbReference>
<dbReference type="PANTHER" id="PTHR30283:SF4">
    <property type="entry name" value="PEROXIDE STRESS RESISTANCE PROTEIN YAAA"/>
    <property type="match status" value="1"/>
</dbReference>
<dbReference type="PANTHER" id="PTHR30283">
    <property type="entry name" value="PEROXIDE STRESS RESPONSE PROTEIN YAAA"/>
    <property type="match status" value="1"/>
</dbReference>
<dbReference type="Pfam" id="PF03883">
    <property type="entry name" value="H2O2_YaaD"/>
    <property type="match status" value="1"/>
</dbReference>
<organism>
    <name type="scientific">Rickettsia rickettsii (strain Iowa)</name>
    <dbReference type="NCBI Taxonomy" id="452659"/>
    <lineage>
        <taxon>Bacteria</taxon>
        <taxon>Pseudomonadati</taxon>
        <taxon>Pseudomonadota</taxon>
        <taxon>Alphaproteobacteria</taxon>
        <taxon>Rickettsiales</taxon>
        <taxon>Rickettsiaceae</taxon>
        <taxon>Rickettsieae</taxon>
        <taxon>Rickettsia</taxon>
        <taxon>spotted fever group</taxon>
    </lineage>
</organism>
<proteinExistence type="inferred from homology"/>
<reference key="1">
    <citation type="journal article" date="2008" name="Infect. Immun.">
        <title>Genomic comparison of virulent Rickettsia rickettsii Sheila Smith and avirulent Rickettsia rickettsii Iowa.</title>
        <authorList>
            <person name="Ellison D.W."/>
            <person name="Clark T.R."/>
            <person name="Sturdevant D.E."/>
            <person name="Virtaneva K."/>
            <person name="Porcella S.F."/>
            <person name="Hackstadt T."/>
        </authorList>
    </citation>
    <scope>NUCLEOTIDE SEQUENCE [LARGE SCALE GENOMIC DNA]</scope>
    <source>
        <strain>Iowa</strain>
    </source>
</reference>
<feature type="chain" id="PRO_1000082773" description="UPF0246 protein RrIowa_0836">
    <location>
        <begin position="1"/>
        <end position="248"/>
    </location>
</feature>
<protein>
    <recommendedName>
        <fullName evidence="1">UPF0246 protein RrIowa_0836</fullName>
    </recommendedName>
</protein>
<evidence type="ECO:0000255" key="1">
    <source>
        <dbReference type="HAMAP-Rule" id="MF_00652"/>
    </source>
</evidence>